<reference key="1">
    <citation type="journal article" date="2001" name="Proc. Natl. Acad. Sci. U.S.A.">
        <title>Complete genomic sequence of Pasteurella multocida Pm70.</title>
        <authorList>
            <person name="May B.J."/>
            <person name="Zhang Q."/>
            <person name="Li L.L."/>
            <person name="Paustian M.L."/>
            <person name="Whittam T.S."/>
            <person name="Kapur V."/>
        </authorList>
    </citation>
    <scope>NUCLEOTIDE SEQUENCE [LARGE SCALE GENOMIC DNA]</scope>
    <source>
        <strain>Pm70</strain>
    </source>
</reference>
<sequence length="148" mass="17926">MKYQKLENQEAHWKWLYLIKKHREGENITRYEERSLSEDKVKQLLSQQNQPQAIENWIKAHLSPHLMIKLDQAIRARRKRFFNGEKQSTKKKSIDLEYAVWLRLSRYSRKMKMTLSETITYMIDERESKAQYEHQISAMKAGLKDLLK</sequence>
<evidence type="ECO:0000255" key="1">
    <source>
        <dbReference type="HAMAP-Rule" id="MF_01073"/>
    </source>
</evidence>
<protein>
    <recommendedName>
        <fullName evidence="1">Macrodomain Ter protein</fullName>
    </recommendedName>
</protein>
<accession>Q9CNF0</accession>
<dbReference type="EMBL" id="AE004439">
    <property type="protein sequence ID" value="AAK02566.1"/>
    <property type="molecule type" value="Genomic_DNA"/>
</dbReference>
<dbReference type="RefSeq" id="WP_010906672.1">
    <property type="nucleotide sequence ID" value="NC_002663.1"/>
</dbReference>
<dbReference type="SMR" id="Q9CNF0"/>
<dbReference type="STRING" id="272843.PM0482"/>
<dbReference type="EnsemblBacteria" id="AAK02566">
    <property type="protein sequence ID" value="AAK02566"/>
    <property type="gene ID" value="PM0482"/>
</dbReference>
<dbReference type="KEGG" id="pmu:PM0482"/>
<dbReference type="HOGENOM" id="CLU_142157_0_0_6"/>
<dbReference type="OrthoDB" id="5814691at2"/>
<dbReference type="Proteomes" id="UP000000809">
    <property type="component" value="Chromosome"/>
</dbReference>
<dbReference type="GO" id="GO:0005737">
    <property type="term" value="C:cytoplasm"/>
    <property type="evidence" value="ECO:0007669"/>
    <property type="project" value="UniProtKB-SubCell"/>
</dbReference>
<dbReference type="GO" id="GO:0043565">
    <property type="term" value="F:sequence-specific DNA binding"/>
    <property type="evidence" value="ECO:0007669"/>
    <property type="project" value="UniProtKB-UniRule"/>
</dbReference>
<dbReference type="GO" id="GO:0051301">
    <property type="term" value="P:cell division"/>
    <property type="evidence" value="ECO:0007669"/>
    <property type="project" value="UniProtKB-UniRule"/>
</dbReference>
<dbReference type="GO" id="GO:0006355">
    <property type="term" value="P:regulation of DNA-templated transcription"/>
    <property type="evidence" value="ECO:0007669"/>
    <property type="project" value="InterPro"/>
</dbReference>
<dbReference type="Gene3D" id="1.20.1270.380">
    <property type="entry name" value="MatP, N-terminal domain"/>
    <property type="match status" value="1"/>
</dbReference>
<dbReference type="Gene3D" id="1.10.1220.10">
    <property type="entry name" value="Met repressor-like"/>
    <property type="match status" value="1"/>
</dbReference>
<dbReference type="HAMAP" id="MF_01073">
    <property type="entry name" value="MatP"/>
    <property type="match status" value="1"/>
</dbReference>
<dbReference type="InterPro" id="IPR013321">
    <property type="entry name" value="Arc_rbn_hlx_hlx"/>
</dbReference>
<dbReference type="InterPro" id="IPR009390">
    <property type="entry name" value="MatP"/>
</dbReference>
<dbReference type="InterPro" id="IPR035375">
    <property type="entry name" value="MatP_C"/>
</dbReference>
<dbReference type="InterPro" id="IPR035087">
    <property type="entry name" value="MatP_N"/>
</dbReference>
<dbReference type="InterPro" id="IPR038339">
    <property type="entry name" value="MatP_N_sf"/>
</dbReference>
<dbReference type="NCBIfam" id="NF003471">
    <property type="entry name" value="PRK05097.1"/>
    <property type="match status" value="1"/>
</dbReference>
<dbReference type="Pfam" id="PF06303">
    <property type="entry name" value="MatP"/>
    <property type="match status" value="1"/>
</dbReference>
<dbReference type="Pfam" id="PF17414">
    <property type="entry name" value="MatP_C"/>
    <property type="match status" value="1"/>
</dbReference>
<keyword id="KW-0131">Cell cycle</keyword>
<keyword id="KW-0132">Cell division</keyword>
<keyword id="KW-0963">Cytoplasm</keyword>
<keyword id="KW-0238">DNA-binding</keyword>
<keyword id="KW-1185">Reference proteome</keyword>
<organism>
    <name type="scientific">Pasteurella multocida (strain Pm70)</name>
    <dbReference type="NCBI Taxonomy" id="272843"/>
    <lineage>
        <taxon>Bacteria</taxon>
        <taxon>Pseudomonadati</taxon>
        <taxon>Pseudomonadota</taxon>
        <taxon>Gammaproteobacteria</taxon>
        <taxon>Pasteurellales</taxon>
        <taxon>Pasteurellaceae</taxon>
        <taxon>Pasteurella</taxon>
    </lineage>
</organism>
<name>MATP_PASMU</name>
<proteinExistence type="inferred from homology"/>
<feature type="chain" id="PRO_0000070352" description="Macrodomain Ter protein">
    <location>
        <begin position="1"/>
        <end position="148"/>
    </location>
</feature>
<comment type="function">
    <text evidence="1">Required for spatial organization of the terminus region of the chromosome (Ter macrodomain) during the cell cycle. Prevents early segregation of duplicated Ter macrodomains during cell division. Binds specifically to matS, which is a 13 bp signature motif repeated within the Ter macrodomain.</text>
</comment>
<comment type="subunit">
    <text evidence="1">Homodimer.</text>
</comment>
<comment type="subcellular location">
    <subcellularLocation>
        <location evidence="1">Cytoplasm</location>
    </subcellularLocation>
</comment>
<comment type="similarity">
    <text evidence="1">Belongs to the MatP family.</text>
</comment>
<gene>
    <name evidence="1" type="primary">matP</name>
    <name type="ordered locus">PM0482</name>
</gene>